<organism>
    <name type="scientific">Human immunodeficiency virus type 2 subtype A (isolate SBLISY)</name>
    <name type="common">HIV-2</name>
    <dbReference type="NCBI Taxonomy" id="11718"/>
    <lineage>
        <taxon>Viruses</taxon>
        <taxon>Riboviria</taxon>
        <taxon>Pararnavirae</taxon>
        <taxon>Artverviricota</taxon>
        <taxon>Revtraviricetes</taxon>
        <taxon>Ortervirales</taxon>
        <taxon>Retroviridae</taxon>
        <taxon>Orthoretrovirinae</taxon>
        <taxon>Lentivirus</taxon>
        <taxon>Human immunodeficiency virus 2</taxon>
    </lineage>
</organism>
<name>ENV_HV2SB</name>
<comment type="function">
    <text evidence="1">The surface protein gp120 (SU) attaches the virus to the host lymphoid cell by binding to the primary receptor CD4. This interaction induces a structural rearrangement creating a high affinity binding site for a chemokine coreceptor like CXCR4 and/or CCR5. This peculiar 2 stage receptor-interaction strategy allows gp120 to maintain the highly conserved coreceptor-binding site in a cryptic conformation, protected from neutralizing antibodies. Since CD4 also displays a binding site for the disulfide-isomerase P4HB/PDI, a P4HB/PDI-CD4-CXCR4-gp120 complex may form. In that complex, P4HB/PDI could reach and reduce gp120 disulfide bonds, causing major conformational changes in gp120. TXN, another PDI family member could also be involved in disulfide rearrangements in Env during fusion. These changes are transmitted to the transmembrane protein gp41 and are thought to activate its fusogenic potential by unmasking its fusion peptide (By similarity).</text>
</comment>
<comment type="function">
    <text evidence="1">The surface protein gp120 is a ligand for CD209/DC-SIGN and CLEC4M/DC-SIGNR, which are respectively found on dendritic cells (DCs), and on endothelial cells of liver sinusoids and lymph node sinuses. These interactions allow capture of viral particles at mucosal surfaces by these cells and subsequent transmission to permissive cells. DCs are professional antigen presenting cells, critical for host immunity by inducing specific immune responses against a broad variety of pathogens. They act as sentinels in various tissues where they take up antigen, process it, and present it to T-cells following migration to lymphoid organs. HIV subverts the migration properties of dendritic cells to gain access to CD4+ T-cells in lymph nodes. Virus transmission to permissive T-cells occurs either in trans (without DCs infection, through viral capture and transmission), or in cis (following DCs productive infection, through the usual CD4-gp120 interaction), thereby inducing a robust infection. In trans infection, bound virions remain infectious over days and it is proposed that they are not degraded, but protected in non-lysosomal acidic organelles within the DCs close to the cell membrane thus contributing to the viral infectious potential during DCs' migration from the periphery to the lymphoid tissues. On arrival at lymphoid tissues, intact virions recycle back to DCs' cell surface allowing virus transmission to CD4+ T-cells. Virion capture also seems to lead to MHC-II-restricted viral antigen presentation, and probably to the activation of HIV-specific CD4+ cells (By similarity).</text>
</comment>
<comment type="function">
    <text evidence="1">The transmembrane protein gp41 (TM) acts as a class I viral fusion protein. Under the current model, the protein has at least 3 conformational states: pre-fusion native state, pre-hairpin intermediate state, and post-fusion hairpin state. During fusion of viral and target intracellular membranes, the coiled coil regions (heptad repeats) assume a trimer-of-hairpins structure, positioning the fusion peptide in close proximity to the C-terminal region of the ectodomain. The formation of this structure appears to drive apposition and subsequent fusion of viral and target cell membranes. Complete fusion occurs in host cell endosomes and is dynamin-dependent, however some lipid transfer might occur at the plasma membrane. The virus undergoes clathrin-dependent internalization long before endosomal fusion, thus minimizing the surface exposure of conserved viral epitopes during fusion and reducing the efficacy of inhibitors targeting these epitopes. Membranes fusion leads to delivery of the nucleocapsid into the cytoplasm (By similarity).</text>
</comment>
<comment type="function">
    <text evidence="1">The envelope glycoprotein gp160 precursor down-modulates cell surface CD4 antigen by interacting with it in the endoplasmic reticulum and blocking its transport to the cell surface.</text>
</comment>
<comment type="function">
    <text evidence="1">The gp120-gp41 heterodimer seems to contribute to T-cell depletion during HIV-1 infection. The envelope glycoproteins expressed on the surface of infected cells induce apoptosis through an interaction with uninfected cells expressing the receptor (CD4) and the coreceptors CXCR4 or CCR5. This type of bystander killing may be obtained by at least three distinct mechanisms. First, the interaction between the 2 cells can induce cellular fusion followed by nuclear fusion within the syncytium. Syncytia are condemned to die from apoptosis. Second, the 2 interacting cells may not fuse entirely and simply exchange plasma membrane lipids, after a sort of hemifusion process, followed by rapid death. Third, it is possible that virus-infected cells, on the point of undergoing apoptosis, fuse with CD4-expressing cells, in which case apoptosis is rapidly transmitted from one cell to the other and thus occurs in a sort of contagious fashion (By similarity).</text>
</comment>
<comment type="function">
    <text evidence="1">The gp120-gp41 heterodimer allows rapid transcytosis of the virus through CD4 negative cells such as simple epithelial monolayers of the intestinal, rectal and endocervical epithelial barriers. Both gp120 and gp41 specifically recognize glycosphingolipids galactosyl-ceramide (GalCer) or 3' sulfo-galactosyl-ceramide (GalS) present in the lipid rafts structures of epithelial cells. Binding to these alternative receptors allows the rapid transcytosis of the virus through the epithelial cells. This transcytotic vesicle-mediated transport of virions from the apical side to the basolateral side of the epithelial cells does not involve infection of the cells themselves (By similarity).</text>
</comment>
<comment type="subunit">
    <molecule>Surface protein gp120</molecule>
    <text evidence="1">The mature envelope protein (Env) consists of a homotrimer of non-covalently associated gp120-gp41 heterodimers. The resulting complex protrudes from the virus surface as a spike. There seems to be as few as 10 spikes on the average virion. Interacts with human CD4, CCR5 and CXCR4, to form a P4HB/PDI-CD4-CXCR4-gp120 complex. Gp120 also interacts with the C-type lectins CD209/DC-SIGN and CLEC4M/DC-SIGNR (collectively referred to as DC-SIGN(R)). Gp120 and gp41 interact with GalCer (By similarity).</text>
</comment>
<comment type="subunit">
    <molecule>Transmembrane protein gp41</molecule>
    <text evidence="1">The mature envelope protein (Env) consists of a homotrimer of non-covalently associated gp120-gp41 heterodimers. The resulting complex protrudes from the virus surface as a spike. There seems to be as few as 10 spikes on the average virion.</text>
</comment>
<comment type="subcellular location">
    <molecule>Transmembrane protein gp41</molecule>
    <subcellularLocation>
        <location evidence="1">Virion membrane</location>
        <topology evidence="1">Single-pass type I membrane protein</topology>
    </subcellularLocation>
    <subcellularLocation>
        <location evidence="1">Host cell membrane</location>
        <topology evidence="1">Single-pass type I membrane protein</topology>
    </subcellularLocation>
    <subcellularLocation>
        <location evidence="3">Host endosome membrane</location>
        <topology evidence="3">Single-pass type I membrane protein</topology>
    </subcellularLocation>
    <text evidence="1">It is probably concentrated at the site of budding and incorporated into the virions possibly by contacts between the cytoplasmic tail of Env and the N-terminus of Gag.</text>
</comment>
<comment type="subcellular location">
    <molecule>Surface protein gp120</molecule>
    <subcellularLocation>
        <location evidence="1">Virion membrane</location>
        <topology evidence="1">Peripheral membrane protein</topology>
    </subcellularLocation>
    <subcellularLocation>
        <location evidence="1">Host cell membrane</location>
        <topology evidence="1">Peripheral membrane protein</topology>
    </subcellularLocation>
    <subcellularLocation>
        <location evidence="3">Host endosome membrane</location>
        <topology evidence="3">Peripheral membrane protein</topology>
    </subcellularLocation>
    <text evidence="1">The surface protein is not anchored to the viral envelope, but associates with the extravirion surface through its binding to TM. It is probably concentrated at the site of budding and incorporated into the virions possibly by contacts between the cytoplasmic tail of Env and the N-terminus of Gag (By similarity).</text>
</comment>
<comment type="domain">
    <text evidence="1">Some of the most genetically diverse regions of the viral genome are present in Env. They are called variable regions 1 through 5 (V1 through V5). Coreceptor usage of gp120 is determined mainly by the primary structure of the third variable region (V3) in the outer domain of gp120. Binding to CCR5 involves a region adjacent in addition to V3 (By similarity).</text>
</comment>
<comment type="domain">
    <text evidence="1">The 17 amino acids long immunosuppressive region is present in many retroviral envelope proteins. Synthetic peptides derived from this relatively conserved sequence inhibit immune function in vitro and in vivo (By similarity).</text>
</comment>
<comment type="PTM">
    <text evidence="1">Specific enzymatic cleavages in vivo yield mature proteins. Envelope glycoproteins are synthesized as an inactive precursor that is heavily N-glycosylated and processed likely by host cell furin in the Golgi to yield the mature SU and TM proteins. The cleavage site between SU and TM requires the minimal sequence [KR]-X-[KR]-R (By similarity).</text>
</comment>
<comment type="PTM">
    <text evidence="1">Palmitoylation of the transmembrane protein and of Env polyprotein (prior to its proteolytic cleavage) is essential for their association with host cell membrane lipid rafts. Palmitoylation is therefore required for envelope trafficking to classical lipid rafts, but not for viral replication (By similarity).</text>
</comment>
<comment type="miscellaneous">
    <text>Some HIV-2 isolates have been described that can infect cells independently of CD4, using CXCR4 as primary receptor. These isolates may have an exposed coreceptor binding site.</text>
</comment>
<protein>
    <recommendedName>
        <fullName>Envelope glycoprotein gp160</fullName>
    </recommendedName>
    <alternativeName>
        <fullName>Env polyprotein</fullName>
    </alternativeName>
    <component>
        <recommendedName>
            <fullName>Surface protein gp120</fullName>
            <shortName>SU</shortName>
        </recommendedName>
        <alternativeName>
            <fullName>Glycoprotein 120</fullName>
            <shortName>gp120</shortName>
        </alternativeName>
    </component>
    <component>
        <recommendedName>
            <fullName>Transmembrane protein gp41</fullName>
            <shortName>TM</shortName>
        </recommendedName>
        <alternativeName>
            <fullName>Glycoprotein 41</fullName>
            <shortName>gp41</shortName>
        </alternativeName>
    </component>
</protein>
<organismHost>
    <name type="scientific">Homo sapiens</name>
    <name type="common">Human</name>
    <dbReference type="NCBI Taxonomy" id="9606"/>
</organismHost>
<dbReference type="EMBL" id="J04498">
    <property type="protein sequence ID" value="AAB00752.1"/>
    <property type="molecule type" value="Genomic_DNA"/>
</dbReference>
<dbReference type="SMR" id="P12449"/>
<dbReference type="GlyCosmos" id="P12449">
    <property type="glycosylation" value="25 sites, No reported glycans"/>
</dbReference>
<dbReference type="Proteomes" id="UP000007427">
    <property type="component" value="Segment"/>
</dbReference>
<dbReference type="GO" id="GO:0044175">
    <property type="term" value="C:host cell endosome membrane"/>
    <property type="evidence" value="ECO:0007669"/>
    <property type="project" value="UniProtKB-SubCell"/>
</dbReference>
<dbReference type="GO" id="GO:0020002">
    <property type="term" value="C:host cell plasma membrane"/>
    <property type="evidence" value="ECO:0007669"/>
    <property type="project" value="UniProtKB-SubCell"/>
</dbReference>
<dbReference type="GO" id="GO:0016020">
    <property type="term" value="C:membrane"/>
    <property type="evidence" value="ECO:0007669"/>
    <property type="project" value="UniProtKB-KW"/>
</dbReference>
<dbReference type="GO" id="GO:0019031">
    <property type="term" value="C:viral envelope"/>
    <property type="evidence" value="ECO:0007669"/>
    <property type="project" value="UniProtKB-KW"/>
</dbReference>
<dbReference type="GO" id="GO:0055036">
    <property type="term" value="C:virion membrane"/>
    <property type="evidence" value="ECO:0007669"/>
    <property type="project" value="UniProtKB-SubCell"/>
</dbReference>
<dbReference type="GO" id="GO:0005198">
    <property type="term" value="F:structural molecule activity"/>
    <property type="evidence" value="ECO:0007669"/>
    <property type="project" value="InterPro"/>
</dbReference>
<dbReference type="GO" id="GO:0075512">
    <property type="term" value="P:clathrin-dependent endocytosis of virus by host cell"/>
    <property type="evidence" value="ECO:0007669"/>
    <property type="project" value="UniProtKB-KW"/>
</dbReference>
<dbReference type="GO" id="GO:0039654">
    <property type="term" value="P:fusion of virus membrane with host endosome membrane"/>
    <property type="evidence" value="ECO:0007669"/>
    <property type="project" value="UniProtKB-KW"/>
</dbReference>
<dbReference type="GO" id="GO:0052170">
    <property type="term" value="P:symbiont-mediated suppression of host innate immune response"/>
    <property type="evidence" value="ECO:0007669"/>
    <property type="project" value="UniProtKB-KW"/>
</dbReference>
<dbReference type="GO" id="GO:0039587">
    <property type="term" value="P:symbiont-mediated-mediated suppression of host tetherin activity"/>
    <property type="evidence" value="ECO:0007669"/>
    <property type="project" value="UniProtKB-KW"/>
</dbReference>
<dbReference type="GO" id="GO:0019062">
    <property type="term" value="P:virion attachment to host cell"/>
    <property type="evidence" value="ECO:0007669"/>
    <property type="project" value="UniProtKB-KW"/>
</dbReference>
<dbReference type="CDD" id="cd09909">
    <property type="entry name" value="HIV-1-like_HR1-HR2"/>
    <property type="match status" value="1"/>
</dbReference>
<dbReference type="Gene3D" id="1.10.287.210">
    <property type="match status" value="1"/>
</dbReference>
<dbReference type="Gene3D" id="2.170.40.20">
    <property type="entry name" value="Human immunodeficiency virus 1, Gp160, envelope glycoprotein"/>
    <property type="match status" value="2"/>
</dbReference>
<dbReference type="InterPro" id="IPR036377">
    <property type="entry name" value="Gp120_core_sf"/>
</dbReference>
<dbReference type="InterPro" id="IPR000328">
    <property type="entry name" value="GP41-like"/>
</dbReference>
<dbReference type="InterPro" id="IPR000777">
    <property type="entry name" value="HIV1_Gp120"/>
</dbReference>
<dbReference type="Pfam" id="PF00516">
    <property type="entry name" value="GP120"/>
    <property type="match status" value="1"/>
</dbReference>
<dbReference type="Pfam" id="PF00517">
    <property type="entry name" value="GP41"/>
    <property type="match status" value="1"/>
</dbReference>
<dbReference type="SUPFAM" id="SSF56502">
    <property type="entry name" value="gp120 core"/>
    <property type="match status" value="1"/>
</dbReference>
<dbReference type="SUPFAM" id="SSF58069">
    <property type="entry name" value="Virus ectodomain"/>
    <property type="match status" value="1"/>
</dbReference>
<gene>
    <name type="primary">env</name>
</gene>
<feature type="signal peptide" evidence="2">
    <location>
        <begin position="1"/>
        <end position="21"/>
    </location>
</feature>
<feature type="chain" id="PRO_0000239501" description="Envelope glycoprotein gp160">
    <location>
        <begin position="22"/>
        <end position="846"/>
    </location>
</feature>
<feature type="chain" id="PRO_0000038445" description="Surface protein gp120" evidence="1">
    <location>
        <begin position="22"/>
        <end position="503"/>
    </location>
</feature>
<feature type="chain" id="PRO_0000038446" description="Transmembrane protein gp41" evidence="1">
    <location>
        <begin position="504"/>
        <end position="846"/>
    </location>
</feature>
<feature type="topological domain" description="Extracellular" evidence="2">
    <location>
        <begin position="22"/>
        <end position="671"/>
    </location>
</feature>
<feature type="transmembrane region" description="Helical" evidence="2">
    <location>
        <begin position="672"/>
        <end position="692"/>
    </location>
</feature>
<feature type="topological domain" description="Cytoplasmic" evidence="2">
    <location>
        <begin position="693"/>
        <end position="846"/>
    </location>
</feature>
<feature type="region of interest" description="V1">
    <location>
        <begin position="112"/>
        <end position="153"/>
    </location>
</feature>
<feature type="region of interest" description="V2">
    <location>
        <begin position="154"/>
        <end position="196"/>
    </location>
</feature>
<feature type="region of interest" description="V3">
    <location>
        <begin position="296"/>
        <end position="329"/>
    </location>
</feature>
<feature type="region of interest" description="V4">
    <location>
        <begin position="389"/>
        <end position="411"/>
    </location>
</feature>
<feature type="region of interest" description="V5">
    <location>
        <begin position="454"/>
        <end position="461"/>
    </location>
</feature>
<feature type="region of interest" description="Fusion peptide" evidence="2">
    <location>
        <begin position="504"/>
        <end position="524"/>
    </location>
</feature>
<feature type="region of interest" description="Immunosuppression" evidence="1">
    <location>
        <begin position="567"/>
        <end position="583"/>
    </location>
</feature>
<feature type="region of interest" description="MPER; binding to GalCer" evidence="1">
    <location>
        <begin position="649"/>
        <end position="670"/>
    </location>
</feature>
<feature type="coiled-coil region" evidence="2">
    <location>
        <begin position="616"/>
        <end position="643"/>
    </location>
</feature>
<feature type="short sequence motif" description="YXXV motif; contains endocytosis signal" evidence="1">
    <location>
        <begin position="699"/>
        <end position="702"/>
    </location>
</feature>
<feature type="short sequence motif" description="Di-leucine internalization motif" evidence="1">
    <location>
        <begin position="845"/>
        <end position="846"/>
    </location>
</feature>
<feature type="site" description="Cleavage; by host furin" evidence="1">
    <location>
        <begin position="503"/>
        <end position="504"/>
    </location>
</feature>
<feature type="lipid moiety-binding region" description="S-palmitoyl cysteine; by host" evidence="1">
    <location>
        <position position="765"/>
    </location>
</feature>
<feature type="glycosylation site" description="N-linked (GlcNAc...) asparagine; by host" evidence="2">
    <location>
        <position position="36"/>
    </location>
</feature>
<feature type="glycosylation site" description="N-linked (GlcNAc...) asparagine; by host" evidence="2">
    <location>
        <position position="69"/>
    </location>
</feature>
<feature type="glycosylation site" description="N-linked (GlcNAc...) asparagine; by host" evidence="2">
    <location>
        <position position="113"/>
    </location>
</feature>
<feature type="glycosylation site" description="N-linked (GlcNAc...) asparagine; by host" evidence="2">
    <location>
        <position position="132"/>
    </location>
</feature>
<feature type="glycosylation site" description="N-linked (GlcNAc...) asparagine; by host" evidence="2">
    <location>
        <position position="142"/>
    </location>
</feature>
<feature type="glycosylation site" description="N-linked (GlcNAc...) asparagine; by host" evidence="2">
    <location>
        <position position="157"/>
    </location>
</feature>
<feature type="glycosylation site" description="N-linked (GlcNAc...) asparagine; by host" evidence="2">
    <location>
        <position position="184"/>
    </location>
</feature>
<feature type="glycosylation site" description="N-linked (GlcNAc...) asparagine; by host" evidence="2">
    <location>
        <position position="197"/>
    </location>
</feature>
<feature type="glycosylation site" description="N-linked (GlcNAc...) asparagine; by host" evidence="2">
    <location>
        <position position="229"/>
    </location>
</feature>
<feature type="glycosylation site" description="N-linked (GlcNAc...) asparagine; by host" evidence="2">
    <location>
        <position position="232"/>
    </location>
</feature>
<feature type="glycosylation site" description="N-linked (GlcNAc...) asparagine; by host" evidence="2">
    <location>
        <position position="239"/>
    </location>
</feature>
<feature type="glycosylation site" description="N-linked (GlcNAc...) asparagine; by host" evidence="2">
    <location>
        <position position="263"/>
    </location>
</feature>
<feature type="glycosylation site" description="N-linked (GlcNAc...) asparagine; by host" evidence="2">
    <location>
        <position position="269"/>
    </location>
</feature>
<feature type="glycosylation site" description="N-linked (GlcNAc...) asparagine; by host" evidence="2">
    <location>
        <position position="280"/>
    </location>
</feature>
<feature type="glycosylation site" description="N-linked (GlcNAc...) asparagine; by host" evidence="2">
    <location>
        <position position="291"/>
    </location>
</feature>
<feature type="glycosylation site" description="N-linked (GlcNAc...) asparagine; by host" evidence="2">
    <location>
        <position position="301"/>
    </location>
</feature>
<feature type="glycosylation site" description="N-linked (GlcNAc...) asparagine; by host" evidence="2">
    <location>
        <position position="357"/>
    </location>
</feature>
<feature type="glycosylation site" description="N-linked (GlcNAc...) asparagine; by host" evidence="2">
    <location>
        <position position="363"/>
    </location>
</feature>
<feature type="glycosylation site" description="N-linked (GlcNAc...) asparagine; by host" evidence="2">
    <location>
        <position position="390"/>
    </location>
</feature>
<feature type="glycosylation site" description="N-linked (GlcNAc...) asparagine; by host" evidence="2">
    <location>
        <position position="400"/>
    </location>
</feature>
<feature type="glycosylation site" description="N-linked (GlcNAc...) asparagine; by host" evidence="2">
    <location>
        <position position="455"/>
    </location>
</feature>
<feature type="glycosylation site" description="N-linked (GlcNAc...) asparagine; by host" evidence="2">
    <location>
        <position position="458"/>
    </location>
</feature>
<feature type="glycosylation site" description="N-linked (GlcNAc...) asparagine; by host" evidence="2">
    <location>
        <position position="603"/>
    </location>
</feature>
<feature type="glycosylation site" description="N-linked (GlcNAc...) asparagine; by host" evidence="2">
    <location>
        <position position="612"/>
    </location>
</feature>
<feature type="glycosylation site" description="N-linked (GlcNAc...) asparagine; by host" evidence="2">
    <location>
        <position position="628"/>
    </location>
</feature>
<feature type="disulfide bond" evidence="1">
    <location>
        <begin position="43"/>
        <end position="56"/>
    </location>
</feature>
<feature type="disulfide bond" evidence="1">
    <location>
        <begin position="100"/>
        <end position="205"/>
    </location>
</feature>
<feature type="disulfide bond" evidence="1">
    <location>
        <begin position="107"/>
        <end position="196"/>
    </location>
</feature>
<feature type="disulfide bond" evidence="1">
    <location>
        <begin position="112"/>
        <end position="154"/>
    </location>
</feature>
<feature type="disulfide bond" evidence="1">
    <location>
        <begin position="218"/>
        <end position="248"/>
    </location>
</feature>
<feature type="disulfide bond" evidence="1">
    <location>
        <begin position="228"/>
        <end position="240"/>
    </location>
</feature>
<feature type="disulfide bond" evidence="1">
    <location>
        <begin position="296"/>
        <end position="330"/>
    </location>
</feature>
<feature type="disulfide bond" evidence="1">
    <location>
        <begin position="382"/>
        <end position="438"/>
    </location>
</feature>
<feature type="disulfide bond" evidence="1">
    <location>
        <begin position="389"/>
        <end position="411"/>
    </location>
</feature>
<keyword id="KW-0014">AIDS</keyword>
<keyword id="KW-0053">Apoptosis</keyword>
<keyword id="KW-1165">Clathrin-mediated endocytosis of virus by host</keyword>
<keyword id="KW-0165">Cleavage on pair of basic residues</keyword>
<keyword id="KW-0175">Coiled coil</keyword>
<keyword id="KW-1015">Disulfide bond</keyword>
<keyword id="KW-1170">Fusion of virus membrane with host endosomal membrane</keyword>
<keyword id="KW-1168">Fusion of virus membrane with host membrane</keyword>
<keyword id="KW-0325">Glycoprotein</keyword>
<keyword id="KW-1032">Host cell membrane</keyword>
<keyword id="KW-1039">Host endosome</keyword>
<keyword id="KW-1043">Host membrane</keyword>
<keyword id="KW-0945">Host-virus interaction</keyword>
<keyword id="KW-1090">Inhibition of host innate immune response by virus</keyword>
<keyword id="KW-1084">Inhibition of host tetherin by virus</keyword>
<keyword id="KW-0449">Lipoprotein</keyword>
<keyword id="KW-0472">Membrane</keyword>
<keyword id="KW-0564">Palmitate</keyword>
<keyword id="KW-0732">Signal</keyword>
<keyword id="KW-0812">Transmembrane</keyword>
<keyword id="KW-1133">Transmembrane helix</keyword>
<keyword id="KW-1161">Viral attachment to host cell</keyword>
<keyword id="KW-0261">Viral envelope protein</keyword>
<keyword id="KW-0899">Viral immunoevasion</keyword>
<keyword id="KW-1162">Viral penetration into host cytoplasm</keyword>
<keyword id="KW-0946">Virion</keyword>
<keyword id="KW-1164">Virus endocytosis by host</keyword>
<keyword id="KW-1160">Virus entry into host cell</keyword>
<proteinExistence type="inferred from homology"/>
<accession>P12449</accession>
<evidence type="ECO:0000250" key="1"/>
<evidence type="ECO:0000255" key="2"/>
<evidence type="ECO:0000305" key="3"/>
<sequence length="846" mass="97694">MSGKIQLLVAFLLTSACLIYCTKYVTVFYGVPVWKNASIPLFCATKNRDTWGTIQCLPDNDDYQEIPLNVTEAFDAWDNIVTEQAVEDVWNLFETSIKPCVKLTPLCVTMNCNASTESAVATTSPSGPDMINDTDPCIQLNNCSGLREEDMVECQFNMTGLELDKKKQYSETWYSKDVVCESDNSTDRKRCYMNHCNTSVITESCDKHYWDAMRFRYCAPPGFVLLRCNDTNYSGFEPNCSKVVASTCTRMMETQPSTWLGFNGTRAENRTYIYWHGRDNRTIISLNKYYNLTILCRRPENKTVVPITLMSGRRFHSQKIINKKPRQAWCRFKGEWREAMQEVKQTLVKHPRYKGTNDTNKINFTAPEKDSDPEVAYMWTNCRGEFLYCNMTWFLNWVENKTGQQHNYVPCHIEQIINTWHKVGKNVYLPPREGELSCESTVTSIIANIDVDGDNRTNITFSAEVAELYRLELGDYKLVEVTPIGFAPTAEKRYSSAPGRHKRGVLVLGFLGFLTTAGAAMGAASLTLSAQSRTLFRGIVQQQQQLLDVVKRQQEMLRLTVWGTKNLQARVTAIEKYLADQARLNSWGCAFRQVCHTTVPWVNDTLTPEWNNMTWQEWEHKIRFLEANISESLEQAQIQQEKNMYELQKLNSWDVFGNWFDLTSWIKYIQYGVMIVVGIVALRIVIYVVQMLSRLRKGYRPVFSSPPGYIQQIHIHKDWEQPDREETEEDVGNDVGSRSWPWPIEYIHFLIRLLIRLLTRLYNSCRDLLSRLYLILQPLRDWLRLKAAYLQYGCEWIQEAFQALARVTRETLTSAGRSLWGALGRIGRGILAVPRRIRQGAEIALL</sequence>
<reference key="1">
    <citation type="journal article" date="1989" name="Proc. Natl. Acad. Sci. U.S.A.">
        <title>Molecular and biological characterization of a replication competent human immunodeficiency type 2 (HIV-2) proviral clone.</title>
        <authorList>
            <person name="Franchini G."/>
            <person name="Fargnoli K.A."/>
            <person name="Giombini F."/>
            <person name="Jagodzinski L.L."/>
            <person name="de Rossi A."/>
            <person name="Bosch M."/>
            <person name="Biberfeld G."/>
            <person name="Fenyo A.M."/>
            <person name="Albert J."/>
            <person name="Gallo R.C."/>
            <person name="Wong-Staal F."/>
        </authorList>
    </citation>
    <scope>NUCLEOTIDE SEQUENCE [GENOMIC DNA]</scope>
</reference>
<reference key="2">
    <citation type="journal article" date="2002" name="J. Gen. Virol.">
        <title>Human immunodeficiency virus type 2.</title>
        <authorList>
            <person name="Reeves J.D."/>
            <person name="Doms R.W."/>
        </authorList>
    </citation>
    <scope>REVIEW</scope>
</reference>